<reference evidence="6" key="1">
    <citation type="journal article" date="1998" name="Science">
        <title>Genome sequence of the nematode C. elegans: a platform for investigating biology.</title>
        <authorList>
            <consortium name="The C. elegans sequencing consortium"/>
        </authorList>
    </citation>
    <scope>NUCLEOTIDE SEQUENCE [LARGE SCALE GENOMIC DNA]</scope>
    <source>
        <strain evidence="6">Bristol N2</strain>
    </source>
</reference>
<reference evidence="4" key="2">
    <citation type="journal article" date="2017" name="Curr. Biol.">
        <title>Dynein-driven retrograde intraflagellar transport is triphasic in C. elegans sensory cilia.</title>
        <authorList>
            <person name="Yi P."/>
            <person name="Li W.J."/>
            <person name="Dong M.Q."/>
            <person name="Ou G."/>
        </authorList>
    </citation>
    <scope>FUNCTION</scope>
    <scope>IDENTIFICATION IN IFT COMPLEX A</scope>
    <scope>SUBCELLULAR LOCATION</scope>
    <scope>TISSUE SPECIFICITY</scope>
    <scope>DISRUPTION PHENOTYPE</scope>
    <scope>IDENTIFICATION BY MASS SPECTROMETRY</scope>
</reference>
<comment type="function">
    <text evidence="2 5">As a component of IFT complex A (IFT-A), a complex required for retrograde ciliary transport and entry into cilia of G protein-coupled receptors (GPCRs), it is involved in ciliogenesis (Probable). In particular, may act redundantly with the intraflagellar transport protein ift-139 to regulate the transport of specific ciliary cargo proteins such as che-3 which are related to motility.</text>
</comment>
<comment type="subunit">
    <text evidence="2">Component of the IFT complex A (IFT-A) composed of at least che-11, daf-10, dyf-2, ift-139, ift-43 and ifta-1.</text>
</comment>
<comment type="subcellular location">
    <subcellularLocation>
        <location evidence="2">Cell projection</location>
        <location evidence="2">Cilium</location>
    </subcellularLocation>
</comment>
<comment type="tissue specificity">
    <text evidence="2">Expressed in ciliated sensory neurons.</text>
</comment>
<comment type="disruption phenotype">
    <text evidence="2">No visible phenotype, with no defects in cilium morphology. Double knockout with intraflagellar transport protein ift-139 results in defective cilium morphology and function.</text>
</comment>
<comment type="similarity">
    <text evidence="4">Belongs to the IFT43 family.</text>
</comment>
<evidence type="ECO:0000256" key="1">
    <source>
        <dbReference type="SAM" id="MobiDB-lite"/>
    </source>
</evidence>
<evidence type="ECO:0000269" key="2">
    <source>
    </source>
</evidence>
<evidence type="ECO:0000303" key="3">
    <source>
    </source>
</evidence>
<evidence type="ECO:0000305" key="4"/>
<evidence type="ECO:0000305" key="5">
    <source>
    </source>
</evidence>
<evidence type="ECO:0000312" key="6">
    <source>
        <dbReference type="Proteomes" id="UP000001940"/>
    </source>
</evidence>
<evidence type="ECO:0000312" key="7">
    <source>
        <dbReference type="WormBase" id="C25H3.12"/>
    </source>
</evidence>
<feature type="chain" id="PRO_0000442208" description="Intraflagellar transport protein 43 homolog" evidence="4">
    <location>
        <begin position="1"/>
        <end position="200"/>
    </location>
</feature>
<feature type="region of interest" description="Disordered" evidence="1">
    <location>
        <begin position="56"/>
        <end position="76"/>
    </location>
</feature>
<feature type="region of interest" description="Disordered" evidence="1">
    <location>
        <begin position="175"/>
        <end position="200"/>
    </location>
</feature>
<feature type="compositionally biased region" description="Basic and acidic residues" evidence="1">
    <location>
        <begin position="175"/>
        <end position="192"/>
    </location>
</feature>
<dbReference type="EMBL" id="BX284602">
    <property type="protein sequence ID" value="CCD65040.1"/>
    <property type="molecule type" value="Genomic_DNA"/>
</dbReference>
<dbReference type="RefSeq" id="NP_495107.1">
    <property type="nucleotide sequence ID" value="NM_062706.4"/>
</dbReference>
<dbReference type="ComplexPortal" id="CPX-1289">
    <property type="entry name" value="Intraflagellar transport complex A"/>
</dbReference>
<dbReference type="FunCoup" id="Q9BIA4">
    <property type="interactions" value="55"/>
</dbReference>
<dbReference type="PaxDb" id="6239-C25H3.12"/>
<dbReference type="PeptideAtlas" id="Q9BIA4"/>
<dbReference type="EnsemblMetazoa" id="C25H3.12.1">
    <property type="protein sequence ID" value="C25H3.12.1"/>
    <property type="gene ID" value="WBGene00016121"/>
</dbReference>
<dbReference type="GeneID" id="173959"/>
<dbReference type="KEGG" id="cel:CELE_C25H3.12"/>
<dbReference type="UCSC" id="C25H3.12">
    <property type="organism name" value="c. elegans"/>
</dbReference>
<dbReference type="AGR" id="WB:WBGene00016121"/>
<dbReference type="CTD" id="173959"/>
<dbReference type="WormBase" id="C25H3.12">
    <property type="protein sequence ID" value="CE27092"/>
    <property type="gene ID" value="WBGene00016121"/>
    <property type="gene designation" value="ift-43"/>
</dbReference>
<dbReference type="eggNOG" id="ENOG502THQ5">
    <property type="taxonomic scope" value="Eukaryota"/>
</dbReference>
<dbReference type="HOGENOM" id="CLU_1462635_0_0_1"/>
<dbReference type="InParanoid" id="Q9BIA4"/>
<dbReference type="OMA" id="NMARISA"/>
<dbReference type="OrthoDB" id="206950at2759"/>
<dbReference type="PRO" id="PR:Q9BIA4"/>
<dbReference type="Proteomes" id="UP000001940">
    <property type="component" value="Chromosome II"/>
</dbReference>
<dbReference type="Bgee" id="WBGene00016121">
    <property type="expression patterns" value="Expressed in pharyngeal muscle cell (C elegans) and 4 other cell types or tissues"/>
</dbReference>
<dbReference type="GO" id="GO:0005929">
    <property type="term" value="C:cilium"/>
    <property type="evidence" value="ECO:0000303"/>
    <property type="project" value="ComplexPortal"/>
</dbReference>
<dbReference type="GO" id="GO:0030991">
    <property type="term" value="C:intraciliary transport particle A"/>
    <property type="evidence" value="ECO:0000303"/>
    <property type="project" value="ComplexPortal"/>
</dbReference>
<dbReference type="GO" id="GO:0060271">
    <property type="term" value="P:cilium assembly"/>
    <property type="evidence" value="ECO:0000303"/>
    <property type="project" value="ComplexPortal"/>
</dbReference>
<dbReference type="GO" id="GO:0035721">
    <property type="term" value="P:intraciliary retrograde transport"/>
    <property type="evidence" value="ECO:0000303"/>
    <property type="project" value="ComplexPortal"/>
</dbReference>
<protein>
    <recommendedName>
        <fullName evidence="4">Intraflagellar transport protein 43 homolog</fullName>
    </recommendedName>
</protein>
<name>IFT43_CAEEL</name>
<keyword id="KW-0966">Cell projection</keyword>
<keyword id="KW-1185">Reference proteome</keyword>
<sequence length="200" mass="22306">MIILENEANEPGFRIQQRAESETGKKGRFGGILKENPIKGFSSETLTRPLTGLFRKTGKSQRKTDDDDSQETIAAPPTNFPNMARISATIESVQINDEYAGYRDRNPETGSKLTLNEGAGVFGNAMHPLTRYFKVGDVDVSILGRSFPTEKTVDEEGPWTAQSLFNSLESRIKKERIDAKDQPSDSRSRNARETLISSKY</sequence>
<accession>Q9BIA4</accession>
<organism evidence="6">
    <name type="scientific">Caenorhabditis elegans</name>
    <dbReference type="NCBI Taxonomy" id="6239"/>
    <lineage>
        <taxon>Eukaryota</taxon>
        <taxon>Metazoa</taxon>
        <taxon>Ecdysozoa</taxon>
        <taxon>Nematoda</taxon>
        <taxon>Chromadorea</taxon>
        <taxon>Rhabditida</taxon>
        <taxon>Rhabditina</taxon>
        <taxon>Rhabditomorpha</taxon>
        <taxon>Rhabditoidea</taxon>
        <taxon>Rhabditidae</taxon>
        <taxon>Peloderinae</taxon>
        <taxon>Caenorhabditis</taxon>
    </lineage>
</organism>
<gene>
    <name evidence="3" type="primary">ift-43</name>
    <name evidence="7" type="ORF">C25H3.12</name>
</gene>
<proteinExistence type="evidence at protein level"/>